<reference key="1">
    <citation type="journal article" date="1993" name="Mol. Gen. Genet.">
        <title>Structure, evolution and expression of the mitochondrial ADP/ATP translocator gene from Chlamydomonas reinhardtii.</title>
        <authorList>
            <person name="Sharpe J.A."/>
            <person name="Day A."/>
        </authorList>
    </citation>
    <scope>NUCLEOTIDE SEQUENCE [MRNA]</scope>
    <source>
        <strain>FUD44-R2</strain>
    </source>
</reference>
<sequence length="308" mass="33528">MAKEEKNFMVDFLAGGLSAAVSKTAAAPIERVKLLIQNQDEMIKQGRLASPYKGIGECFVRTVREEGFGSLWRGNTANVIRYFPTQALNFAFKDKFKRMFGFNKDKEYWKWFAGNMASGGAAGAVSLSFVYSLDYARTRLANDAKSAKKGGGDRQFNGLVDVYRKTIASDGIAGLYRGFNISCVGIVVYRGLYFGMYDSLKPVVLVGPLANNFLAAFLLGWGITIGAGLASYPIDTIRRRMMMTSGSAVKYNSSFHCFQEIVKNEGMKSLFKGAGANILRAVAGAGVLAGYDQLQVILLGKKYGSGEA</sequence>
<comment type="function">
    <text evidence="1 6">ADP:ATP antiporter that mediates import of ADP into the mitochondrial matrix for ATP synthesis, and export of ATP out to fuel the cell (By similarity). Cycles between the cytoplasmic-open state (c-state) and the matrix-open state (m-state): operates by the alternating access mechanism with a single substrate-binding site intermittently exposed to either the cytosolic (c-state) or matrix (m-state) side of the inner mitochondrial membrane (By similarity).</text>
</comment>
<comment type="catalytic activity">
    <reaction evidence="6">
        <text>ADP(in) + ATP(out) = ADP(out) + ATP(in)</text>
        <dbReference type="Rhea" id="RHEA:34999"/>
        <dbReference type="ChEBI" id="CHEBI:30616"/>
        <dbReference type="ChEBI" id="CHEBI:456216"/>
    </reaction>
    <physiologicalReaction direction="left-to-right" evidence="6">
        <dbReference type="Rhea" id="RHEA:35000"/>
    </physiologicalReaction>
</comment>
<comment type="activity regulation">
    <text evidence="1">The matrix-open state (m-state) is inhibited by the membrane-permeable bongkrekic acid (BKA). The cytoplasmic-open state (c-state) is inhibited by the membrane-impermeable toxic inhibitor carboxyatractyloside (CATR).</text>
</comment>
<comment type="subunit">
    <text evidence="1 2">Monomer.</text>
</comment>
<comment type="subcellular location">
    <subcellularLocation>
        <location evidence="5">Mitochondrion inner membrane</location>
        <topology evidence="7">Multi-pass membrane protein</topology>
    </subcellularLocation>
</comment>
<comment type="domain">
    <text evidence="4">The transmembrane helices are not perpendicular to the plane of the membrane, but cross the membrane at an angle. At least 2 of the odd-numbered transmembrane helices exhibit a sharp kink, due to the presence of a conserved proline residue.</text>
</comment>
<comment type="similarity">
    <text evidence="8">Belongs to the mitochondrial carrier (TC 2.A.29) family.</text>
</comment>
<keyword id="KW-0050">Antiport</keyword>
<keyword id="KW-0472">Membrane</keyword>
<keyword id="KW-0496">Mitochondrion</keyword>
<keyword id="KW-0999">Mitochondrion inner membrane</keyword>
<keyword id="KW-0677">Repeat</keyword>
<keyword id="KW-0812">Transmembrane</keyword>
<keyword id="KW-1133">Transmembrane helix</keyword>
<keyword id="KW-0813">Transport</keyword>
<feature type="chain" id="PRO_0000090588" description="ADP,ATP carrier protein">
    <location>
        <begin position="1"/>
        <end position="308"/>
    </location>
</feature>
<feature type="transmembrane region" description="Helical; Name=1" evidence="4">
    <location>
        <begin position="8"/>
        <end position="35"/>
    </location>
</feature>
<feature type="transmembrane region" description="Helical; Name=2" evidence="4">
    <location>
        <begin position="76"/>
        <end position="100"/>
    </location>
</feature>
<feature type="transmembrane region" description="Helical; Name=3" evidence="4">
    <location>
        <begin position="108"/>
        <end position="128"/>
    </location>
</feature>
<feature type="transmembrane region" description="Helical; Name=4" evidence="4">
    <location>
        <begin position="179"/>
        <end position="200"/>
    </location>
</feature>
<feature type="transmembrane region" description="Helical; Name=5" evidence="4">
    <location>
        <begin position="214"/>
        <end position="234"/>
    </location>
</feature>
<feature type="transmembrane region" description="Helical; Name=6" evidence="4">
    <location>
        <begin position="274"/>
        <end position="294"/>
    </location>
</feature>
<feature type="repeat" description="Solcar 1">
    <location>
        <begin position="6"/>
        <end position="99"/>
    </location>
</feature>
<feature type="repeat" description="Solcar 2">
    <location>
        <begin position="110"/>
        <end position="203"/>
    </location>
</feature>
<feature type="repeat" description="Solcar 3">
    <location>
        <begin position="211"/>
        <end position="297"/>
    </location>
</feature>
<feature type="region of interest" description="Important for transport activity" evidence="3">
    <location>
        <begin position="238"/>
        <end position="243"/>
    </location>
</feature>
<feature type="short sequence motif" description="Nucleotide carrier signature motif" evidence="2">
    <location>
        <begin position="238"/>
        <end position="243"/>
    </location>
</feature>
<feature type="binding site" evidence="2">
    <location>
        <position position="81"/>
    </location>
    <ligand>
        <name>ADP</name>
        <dbReference type="ChEBI" id="CHEBI:456216"/>
    </ligand>
</feature>
<feature type="binding site" evidence="2">
    <location>
        <position position="93"/>
    </location>
    <ligand>
        <name>ADP</name>
        <dbReference type="ChEBI" id="CHEBI:456216"/>
    </ligand>
</feature>
<feature type="binding site" evidence="2">
    <location>
        <position position="238"/>
    </location>
    <ligand>
        <name>ADP</name>
        <dbReference type="ChEBI" id="CHEBI:456216"/>
    </ligand>
</feature>
<evidence type="ECO:0000250" key="1">
    <source>
        <dbReference type="UniProtKB" id="G2QNH0"/>
    </source>
</evidence>
<evidence type="ECO:0000250" key="2">
    <source>
        <dbReference type="UniProtKB" id="P02722"/>
    </source>
</evidence>
<evidence type="ECO:0000250" key="3">
    <source>
        <dbReference type="UniProtKB" id="P12235"/>
    </source>
</evidence>
<evidence type="ECO:0000250" key="4">
    <source>
        <dbReference type="UniProtKB" id="P18239"/>
    </source>
</evidence>
<evidence type="ECO:0000250" key="5">
    <source>
        <dbReference type="UniProtKB" id="P31167"/>
    </source>
</evidence>
<evidence type="ECO:0000250" key="6">
    <source>
        <dbReference type="UniProtKB" id="P48962"/>
    </source>
</evidence>
<evidence type="ECO:0000255" key="7"/>
<evidence type="ECO:0000305" key="8"/>
<dbReference type="EMBL" id="X65194">
    <property type="protein sequence ID" value="CAA46311.1"/>
    <property type="molecule type" value="mRNA"/>
</dbReference>
<dbReference type="PIR" id="S30259">
    <property type="entry name" value="S30259"/>
</dbReference>
<dbReference type="RefSeq" id="XP_001695177.1">
    <property type="nucleotide sequence ID" value="XM_001695125.1"/>
</dbReference>
<dbReference type="SMR" id="P27080"/>
<dbReference type="PaxDb" id="3055-EDP01885"/>
<dbReference type="ProMEX" id="P27080"/>
<dbReference type="EnsemblPlants" id="PNW78206">
    <property type="protein sequence ID" value="PNW78206"/>
    <property type="gene ID" value="CHLRE_09g386650v5"/>
</dbReference>
<dbReference type="EnsemblPlants" id="PNW78207">
    <property type="protein sequence ID" value="PNW78207"/>
    <property type="gene ID" value="CHLRE_09g386650v5"/>
</dbReference>
<dbReference type="Gramene" id="PNW78206">
    <property type="protein sequence ID" value="PNW78206"/>
    <property type="gene ID" value="CHLRE_09g386650v5"/>
</dbReference>
<dbReference type="Gramene" id="PNW78207">
    <property type="protein sequence ID" value="PNW78207"/>
    <property type="gene ID" value="CHLRE_09g386650v5"/>
</dbReference>
<dbReference type="KEGG" id="cre:CHLRE_09g386650v5"/>
<dbReference type="eggNOG" id="KOG0749">
    <property type="taxonomic scope" value="Eukaryota"/>
</dbReference>
<dbReference type="HOGENOM" id="CLU_015166_12_0_1"/>
<dbReference type="OMA" id="KLQVIMF"/>
<dbReference type="OrthoDB" id="270584at2759"/>
<dbReference type="GO" id="GO:0005743">
    <property type="term" value="C:mitochondrial inner membrane"/>
    <property type="evidence" value="ECO:0007669"/>
    <property type="project" value="UniProtKB-SubCell"/>
</dbReference>
<dbReference type="GO" id="GO:0005471">
    <property type="term" value="F:ATP:ADP antiporter activity"/>
    <property type="evidence" value="ECO:0007669"/>
    <property type="project" value="InterPro"/>
</dbReference>
<dbReference type="GO" id="GO:0140021">
    <property type="term" value="P:mitochondrial ADP transmembrane transport"/>
    <property type="evidence" value="ECO:0007669"/>
    <property type="project" value="InterPro"/>
</dbReference>
<dbReference type="GO" id="GO:1990544">
    <property type="term" value="P:mitochondrial ATP transmembrane transport"/>
    <property type="evidence" value="ECO:0007669"/>
    <property type="project" value="InterPro"/>
</dbReference>
<dbReference type="FunFam" id="1.50.40.10:FF:000001">
    <property type="entry name" value="ADP,ATP carrier protein, mitochondrial"/>
    <property type="match status" value="1"/>
</dbReference>
<dbReference type="Gene3D" id="1.50.40.10">
    <property type="entry name" value="Mitochondrial carrier domain"/>
    <property type="match status" value="1"/>
</dbReference>
<dbReference type="InterPro" id="IPR002113">
    <property type="entry name" value="ADT_euk_type"/>
</dbReference>
<dbReference type="InterPro" id="IPR002067">
    <property type="entry name" value="Mit_carrier"/>
</dbReference>
<dbReference type="InterPro" id="IPR018108">
    <property type="entry name" value="Mitochondrial_sb/sol_carrier"/>
</dbReference>
<dbReference type="InterPro" id="IPR023395">
    <property type="entry name" value="Mt_carrier_dom_sf"/>
</dbReference>
<dbReference type="PANTHER" id="PTHR45635">
    <property type="entry name" value="ADP,ATP CARRIER PROTEIN 1-RELATED-RELATED"/>
    <property type="match status" value="1"/>
</dbReference>
<dbReference type="PANTHER" id="PTHR45635:SF14">
    <property type="entry name" value="ADP_ATP TRANSLOCASE"/>
    <property type="match status" value="1"/>
</dbReference>
<dbReference type="Pfam" id="PF00153">
    <property type="entry name" value="Mito_carr"/>
    <property type="match status" value="3"/>
</dbReference>
<dbReference type="PRINTS" id="PR00927">
    <property type="entry name" value="ADPTRNSLCASE"/>
</dbReference>
<dbReference type="PRINTS" id="PR00926">
    <property type="entry name" value="MITOCARRIER"/>
</dbReference>
<dbReference type="SUPFAM" id="SSF103506">
    <property type="entry name" value="Mitochondrial carrier"/>
    <property type="match status" value="1"/>
</dbReference>
<dbReference type="PROSITE" id="PS50920">
    <property type="entry name" value="SOLCAR"/>
    <property type="match status" value="3"/>
</dbReference>
<organism>
    <name type="scientific">Chlamydomonas reinhardtii</name>
    <name type="common">Chlamydomonas smithii</name>
    <dbReference type="NCBI Taxonomy" id="3055"/>
    <lineage>
        <taxon>Eukaryota</taxon>
        <taxon>Viridiplantae</taxon>
        <taxon>Chlorophyta</taxon>
        <taxon>core chlorophytes</taxon>
        <taxon>Chlorophyceae</taxon>
        <taxon>CS clade</taxon>
        <taxon>Chlamydomonadales</taxon>
        <taxon>Chlamydomonadaceae</taxon>
        <taxon>Chlamydomonas</taxon>
    </lineage>
</organism>
<protein>
    <recommendedName>
        <fullName>ADP,ATP carrier protein</fullName>
    </recommendedName>
    <alternativeName>
        <fullName>ADP/ATP translocase</fullName>
    </alternativeName>
    <alternativeName>
        <fullName>Adenine nucleotide translocator</fullName>
        <shortName>ANT</shortName>
    </alternativeName>
</protein>
<accession>P27080</accession>
<gene>
    <name type="primary">ABT</name>
</gene>
<proteinExistence type="evidence at transcript level"/>
<name>ADT_CHLRE</name>